<organism>
    <name type="scientific">Rhizobium meliloti (strain 1021)</name>
    <name type="common">Ensifer meliloti</name>
    <name type="synonym">Sinorhizobium meliloti</name>
    <dbReference type="NCBI Taxonomy" id="266834"/>
    <lineage>
        <taxon>Bacteria</taxon>
        <taxon>Pseudomonadati</taxon>
        <taxon>Pseudomonadota</taxon>
        <taxon>Alphaproteobacteria</taxon>
        <taxon>Hyphomicrobiales</taxon>
        <taxon>Rhizobiaceae</taxon>
        <taxon>Sinorhizobium/Ensifer group</taxon>
        <taxon>Sinorhizobium</taxon>
    </lineage>
</organism>
<keyword id="KW-0067">ATP-binding</keyword>
<keyword id="KW-0997">Cell inner membrane</keyword>
<keyword id="KW-1003">Cell membrane</keyword>
<keyword id="KW-0472">Membrane</keyword>
<keyword id="KW-0547">Nucleotide-binding</keyword>
<keyword id="KW-1185">Reference proteome</keyword>
<keyword id="KW-1278">Translocase</keyword>
<keyword id="KW-0813">Transport</keyword>
<gene>
    <name evidence="1" type="primary">lolD</name>
    <name type="ordered locus">R01288</name>
    <name type="ORF">SMc01376</name>
</gene>
<evidence type="ECO:0000255" key="1">
    <source>
        <dbReference type="HAMAP-Rule" id="MF_01708"/>
    </source>
</evidence>
<proteinExistence type="inferred from homology"/>
<protein>
    <recommendedName>
        <fullName evidence="1">Lipoprotein-releasing system ATP-binding protein LolD</fullName>
        <ecNumber evidence="1">7.6.2.-</ecNumber>
    </recommendedName>
</protein>
<feature type="chain" id="PRO_0000092453" description="Lipoprotein-releasing system ATP-binding protein LolD">
    <location>
        <begin position="1"/>
        <end position="228"/>
    </location>
</feature>
<feature type="domain" description="ABC transporter" evidence="1">
    <location>
        <begin position="7"/>
        <end position="227"/>
    </location>
</feature>
<feature type="binding site" evidence="1">
    <location>
        <begin position="43"/>
        <end position="50"/>
    </location>
    <ligand>
        <name>ATP</name>
        <dbReference type="ChEBI" id="CHEBI:30616"/>
    </ligand>
</feature>
<sequence length="228" mass="24541">MNARVALQLSGIERHYGEGDTFLPILKGADLTLRSGETVALVAPSGTGKSTLLHIAGLLEHPDEGEVLVNGTSCNGLSDDRRTAIRRNEIGFVYQFHHLLPEFSALENIMMPQLIAGLPKAEAAERASALLDYMRIGHRGSHRPTELSGGEQQRVAIARAVANAPLILLADEPTGNLDPETAGYVFEALEALARQSGLAALIATHNHELASLMDRRVTIEDGKVVELK</sequence>
<dbReference type="EC" id="7.6.2.-" evidence="1"/>
<dbReference type="EMBL" id="AL591688">
    <property type="protein sequence ID" value="CAC45867.1"/>
    <property type="molecule type" value="Genomic_DNA"/>
</dbReference>
<dbReference type="RefSeq" id="NP_385394.1">
    <property type="nucleotide sequence ID" value="NC_003047.1"/>
</dbReference>
<dbReference type="RefSeq" id="WP_010969157.1">
    <property type="nucleotide sequence ID" value="NC_003047.1"/>
</dbReference>
<dbReference type="SMR" id="Q92QN0"/>
<dbReference type="EnsemblBacteria" id="CAC45867">
    <property type="protein sequence ID" value="CAC45867"/>
    <property type="gene ID" value="SMc01376"/>
</dbReference>
<dbReference type="KEGG" id="sme:SMc01376"/>
<dbReference type="PATRIC" id="fig|266834.11.peg.2702"/>
<dbReference type="eggNOG" id="COG1136">
    <property type="taxonomic scope" value="Bacteria"/>
</dbReference>
<dbReference type="HOGENOM" id="CLU_000604_1_22_5"/>
<dbReference type="OrthoDB" id="9787227at2"/>
<dbReference type="Proteomes" id="UP000001976">
    <property type="component" value="Chromosome"/>
</dbReference>
<dbReference type="GO" id="GO:0005886">
    <property type="term" value="C:plasma membrane"/>
    <property type="evidence" value="ECO:0007669"/>
    <property type="project" value="UniProtKB-SubCell"/>
</dbReference>
<dbReference type="GO" id="GO:0005524">
    <property type="term" value="F:ATP binding"/>
    <property type="evidence" value="ECO:0007669"/>
    <property type="project" value="UniProtKB-KW"/>
</dbReference>
<dbReference type="GO" id="GO:0016887">
    <property type="term" value="F:ATP hydrolysis activity"/>
    <property type="evidence" value="ECO:0007669"/>
    <property type="project" value="InterPro"/>
</dbReference>
<dbReference type="GO" id="GO:0022857">
    <property type="term" value="F:transmembrane transporter activity"/>
    <property type="evidence" value="ECO:0007669"/>
    <property type="project" value="TreeGrafter"/>
</dbReference>
<dbReference type="GO" id="GO:0044874">
    <property type="term" value="P:lipoprotein localization to outer membrane"/>
    <property type="evidence" value="ECO:0007669"/>
    <property type="project" value="TreeGrafter"/>
</dbReference>
<dbReference type="GO" id="GO:0089705">
    <property type="term" value="P:protein localization to outer membrane"/>
    <property type="evidence" value="ECO:0007669"/>
    <property type="project" value="TreeGrafter"/>
</dbReference>
<dbReference type="CDD" id="cd03255">
    <property type="entry name" value="ABC_MJ0796_LolCDE_FtsE"/>
    <property type="match status" value="1"/>
</dbReference>
<dbReference type="FunFam" id="3.40.50.300:FF:000032">
    <property type="entry name" value="Export ABC transporter ATP-binding protein"/>
    <property type="match status" value="1"/>
</dbReference>
<dbReference type="Gene3D" id="3.40.50.300">
    <property type="entry name" value="P-loop containing nucleotide triphosphate hydrolases"/>
    <property type="match status" value="1"/>
</dbReference>
<dbReference type="InterPro" id="IPR003593">
    <property type="entry name" value="AAA+_ATPase"/>
</dbReference>
<dbReference type="InterPro" id="IPR003439">
    <property type="entry name" value="ABC_transporter-like_ATP-bd"/>
</dbReference>
<dbReference type="InterPro" id="IPR017871">
    <property type="entry name" value="ABC_transporter-like_CS"/>
</dbReference>
<dbReference type="InterPro" id="IPR015854">
    <property type="entry name" value="ABC_transpr_LolD-like"/>
</dbReference>
<dbReference type="InterPro" id="IPR017911">
    <property type="entry name" value="MacB-like_ATP-bd"/>
</dbReference>
<dbReference type="InterPro" id="IPR027417">
    <property type="entry name" value="P-loop_NTPase"/>
</dbReference>
<dbReference type="PANTHER" id="PTHR24220">
    <property type="entry name" value="IMPORT ATP-BINDING PROTEIN"/>
    <property type="match status" value="1"/>
</dbReference>
<dbReference type="PANTHER" id="PTHR24220:SF689">
    <property type="entry name" value="LIPOPROTEIN-RELEASING SYSTEM ATP-BINDING PROTEIN LOLD"/>
    <property type="match status" value="1"/>
</dbReference>
<dbReference type="Pfam" id="PF00005">
    <property type="entry name" value="ABC_tran"/>
    <property type="match status" value="1"/>
</dbReference>
<dbReference type="SMART" id="SM00382">
    <property type="entry name" value="AAA"/>
    <property type="match status" value="1"/>
</dbReference>
<dbReference type="SUPFAM" id="SSF52540">
    <property type="entry name" value="P-loop containing nucleoside triphosphate hydrolases"/>
    <property type="match status" value="1"/>
</dbReference>
<dbReference type="PROSITE" id="PS00211">
    <property type="entry name" value="ABC_TRANSPORTER_1"/>
    <property type="match status" value="1"/>
</dbReference>
<dbReference type="PROSITE" id="PS50893">
    <property type="entry name" value="ABC_TRANSPORTER_2"/>
    <property type="match status" value="1"/>
</dbReference>
<dbReference type="PROSITE" id="PS51244">
    <property type="entry name" value="LOLD"/>
    <property type="match status" value="1"/>
</dbReference>
<accession>Q92QN0</accession>
<reference key="1">
    <citation type="journal article" date="2001" name="Proc. Natl. Acad. Sci. U.S.A.">
        <title>Analysis of the chromosome sequence of the legume symbiont Sinorhizobium meliloti strain 1021.</title>
        <authorList>
            <person name="Capela D."/>
            <person name="Barloy-Hubler F."/>
            <person name="Gouzy J."/>
            <person name="Bothe G."/>
            <person name="Ampe F."/>
            <person name="Batut J."/>
            <person name="Boistard P."/>
            <person name="Becker A."/>
            <person name="Boutry M."/>
            <person name="Cadieu E."/>
            <person name="Dreano S."/>
            <person name="Gloux S."/>
            <person name="Godrie T."/>
            <person name="Goffeau A."/>
            <person name="Kahn D."/>
            <person name="Kiss E."/>
            <person name="Lelaure V."/>
            <person name="Masuy D."/>
            <person name="Pohl T."/>
            <person name="Portetelle D."/>
            <person name="Puehler A."/>
            <person name="Purnelle B."/>
            <person name="Ramsperger U."/>
            <person name="Renard C."/>
            <person name="Thebault P."/>
            <person name="Vandenbol M."/>
            <person name="Weidner S."/>
            <person name="Galibert F."/>
        </authorList>
    </citation>
    <scope>NUCLEOTIDE SEQUENCE [LARGE SCALE GENOMIC DNA]</scope>
    <source>
        <strain>1021</strain>
    </source>
</reference>
<reference key="2">
    <citation type="journal article" date="2001" name="Science">
        <title>The composite genome of the legume symbiont Sinorhizobium meliloti.</title>
        <authorList>
            <person name="Galibert F."/>
            <person name="Finan T.M."/>
            <person name="Long S.R."/>
            <person name="Puehler A."/>
            <person name="Abola P."/>
            <person name="Ampe F."/>
            <person name="Barloy-Hubler F."/>
            <person name="Barnett M.J."/>
            <person name="Becker A."/>
            <person name="Boistard P."/>
            <person name="Bothe G."/>
            <person name="Boutry M."/>
            <person name="Bowser L."/>
            <person name="Buhrmester J."/>
            <person name="Cadieu E."/>
            <person name="Capela D."/>
            <person name="Chain P."/>
            <person name="Cowie A."/>
            <person name="Davis R.W."/>
            <person name="Dreano S."/>
            <person name="Federspiel N.A."/>
            <person name="Fisher R.F."/>
            <person name="Gloux S."/>
            <person name="Godrie T."/>
            <person name="Goffeau A."/>
            <person name="Golding B."/>
            <person name="Gouzy J."/>
            <person name="Gurjal M."/>
            <person name="Hernandez-Lucas I."/>
            <person name="Hong A."/>
            <person name="Huizar L."/>
            <person name="Hyman R.W."/>
            <person name="Jones T."/>
            <person name="Kahn D."/>
            <person name="Kahn M.L."/>
            <person name="Kalman S."/>
            <person name="Keating D.H."/>
            <person name="Kiss E."/>
            <person name="Komp C."/>
            <person name="Lelaure V."/>
            <person name="Masuy D."/>
            <person name="Palm C."/>
            <person name="Peck M.C."/>
            <person name="Pohl T.M."/>
            <person name="Portetelle D."/>
            <person name="Purnelle B."/>
            <person name="Ramsperger U."/>
            <person name="Surzycki R."/>
            <person name="Thebault P."/>
            <person name="Vandenbol M."/>
            <person name="Vorhoelter F.J."/>
            <person name="Weidner S."/>
            <person name="Wells D.H."/>
            <person name="Wong K."/>
            <person name="Yeh K.-C."/>
            <person name="Batut J."/>
        </authorList>
    </citation>
    <scope>NUCLEOTIDE SEQUENCE [LARGE SCALE GENOMIC DNA]</scope>
    <source>
        <strain>1021</strain>
    </source>
</reference>
<comment type="function">
    <text evidence="1">Part of the ABC transporter complex LolCDE involved in the translocation of mature outer membrane-directed lipoproteins, from the inner membrane to the periplasmic chaperone, LolA. Responsible for the formation of the LolA-lipoprotein complex in an ATP-dependent manner.</text>
</comment>
<comment type="subunit">
    <text evidence="1">The complex is composed of two ATP-binding proteins (LolD) and two transmembrane proteins (LolC and LolE).</text>
</comment>
<comment type="subcellular location">
    <subcellularLocation>
        <location evidence="1">Cell inner membrane</location>
        <topology evidence="1">Peripheral membrane protein</topology>
    </subcellularLocation>
</comment>
<comment type="similarity">
    <text evidence="1">Belongs to the ABC transporter superfamily. Lipoprotein translocase (TC 3.A.1.125) family.</text>
</comment>
<name>LOLD_RHIME</name>